<protein>
    <recommendedName>
        <fullName evidence="1">ATP synthase subunit alpha</fullName>
        <ecNumber evidence="1">7.1.2.2</ecNumber>
    </recommendedName>
    <alternativeName>
        <fullName evidence="1">ATP synthase F1 sector subunit alpha</fullName>
    </alternativeName>
    <alternativeName>
        <fullName evidence="1">F-ATPase subunit alpha</fullName>
    </alternativeName>
</protein>
<organism>
    <name type="scientific">Citrifermentans bemidjiense (strain ATCC BAA-1014 / DSM 16622 / JCM 12645 / Bem)</name>
    <name type="common">Geobacter bemidjiensis</name>
    <dbReference type="NCBI Taxonomy" id="404380"/>
    <lineage>
        <taxon>Bacteria</taxon>
        <taxon>Pseudomonadati</taxon>
        <taxon>Thermodesulfobacteriota</taxon>
        <taxon>Desulfuromonadia</taxon>
        <taxon>Geobacterales</taxon>
        <taxon>Geobacteraceae</taxon>
        <taxon>Citrifermentans</taxon>
    </lineage>
</organism>
<gene>
    <name evidence="1" type="primary">atpA</name>
    <name type="ordered locus">Gbem_3952</name>
</gene>
<feature type="chain" id="PRO_1000143386" description="ATP synthase subunit alpha">
    <location>
        <begin position="1"/>
        <end position="502"/>
    </location>
</feature>
<feature type="binding site" evidence="1">
    <location>
        <begin position="169"/>
        <end position="176"/>
    </location>
    <ligand>
        <name>ATP</name>
        <dbReference type="ChEBI" id="CHEBI:30616"/>
    </ligand>
</feature>
<feature type="site" description="Required for activity" evidence="1">
    <location>
        <position position="362"/>
    </location>
</feature>
<name>ATPA_CITBB</name>
<evidence type="ECO:0000255" key="1">
    <source>
        <dbReference type="HAMAP-Rule" id="MF_01346"/>
    </source>
</evidence>
<reference key="1">
    <citation type="submission" date="2008-07" db="EMBL/GenBank/DDBJ databases">
        <title>Complete sequence of Geobacter bemidjiensis BEM.</title>
        <authorList>
            <consortium name="US DOE Joint Genome Institute"/>
            <person name="Lucas S."/>
            <person name="Copeland A."/>
            <person name="Lapidus A."/>
            <person name="Glavina del Rio T."/>
            <person name="Dalin E."/>
            <person name="Tice H."/>
            <person name="Bruce D."/>
            <person name="Goodwin L."/>
            <person name="Pitluck S."/>
            <person name="Kiss H."/>
            <person name="Brettin T."/>
            <person name="Detter J.C."/>
            <person name="Han C."/>
            <person name="Kuske C.R."/>
            <person name="Schmutz J."/>
            <person name="Larimer F."/>
            <person name="Land M."/>
            <person name="Hauser L."/>
            <person name="Kyrpides N."/>
            <person name="Lykidis A."/>
            <person name="Lovley D."/>
            <person name="Richardson P."/>
        </authorList>
    </citation>
    <scope>NUCLEOTIDE SEQUENCE [LARGE SCALE GENOMIC DNA]</scope>
    <source>
        <strain>ATCC BAA-1014 / DSM 16622 / JCM 12645 / Bem</strain>
    </source>
</reference>
<proteinExistence type="inferred from homology"/>
<dbReference type="EC" id="7.1.2.2" evidence="1"/>
<dbReference type="EMBL" id="CP001124">
    <property type="protein sequence ID" value="ACH40944.1"/>
    <property type="molecule type" value="Genomic_DNA"/>
</dbReference>
<dbReference type="RefSeq" id="WP_012532378.1">
    <property type="nucleotide sequence ID" value="NC_011146.1"/>
</dbReference>
<dbReference type="SMR" id="B5EFI9"/>
<dbReference type="STRING" id="404380.Gbem_3952"/>
<dbReference type="KEGG" id="gbm:Gbem_3952"/>
<dbReference type="eggNOG" id="COG0056">
    <property type="taxonomic scope" value="Bacteria"/>
</dbReference>
<dbReference type="HOGENOM" id="CLU_010091_2_1_7"/>
<dbReference type="OrthoDB" id="9803053at2"/>
<dbReference type="Proteomes" id="UP000008825">
    <property type="component" value="Chromosome"/>
</dbReference>
<dbReference type="GO" id="GO:0005886">
    <property type="term" value="C:plasma membrane"/>
    <property type="evidence" value="ECO:0007669"/>
    <property type="project" value="UniProtKB-SubCell"/>
</dbReference>
<dbReference type="GO" id="GO:0045259">
    <property type="term" value="C:proton-transporting ATP synthase complex"/>
    <property type="evidence" value="ECO:0007669"/>
    <property type="project" value="UniProtKB-KW"/>
</dbReference>
<dbReference type="GO" id="GO:0043531">
    <property type="term" value="F:ADP binding"/>
    <property type="evidence" value="ECO:0007669"/>
    <property type="project" value="TreeGrafter"/>
</dbReference>
<dbReference type="GO" id="GO:0005524">
    <property type="term" value="F:ATP binding"/>
    <property type="evidence" value="ECO:0007669"/>
    <property type="project" value="UniProtKB-UniRule"/>
</dbReference>
<dbReference type="GO" id="GO:0046933">
    <property type="term" value="F:proton-transporting ATP synthase activity, rotational mechanism"/>
    <property type="evidence" value="ECO:0007669"/>
    <property type="project" value="UniProtKB-UniRule"/>
</dbReference>
<dbReference type="CDD" id="cd18113">
    <property type="entry name" value="ATP-synt_F1_alpha_C"/>
    <property type="match status" value="1"/>
</dbReference>
<dbReference type="CDD" id="cd18116">
    <property type="entry name" value="ATP-synt_F1_alpha_N"/>
    <property type="match status" value="1"/>
</dbReference>
<dbReference type="CDD" id="cd01132">
    <property type="entry name" value="F1-ATPase_alpha_CD"/>
    <property type="match status" value="1"/>
</dbReference>
<dbReference type="FunFam" id="1.20.150.20:FF:000001">
    <property type="entry name" value="ATP synthase subunit alpha"/>
    <property type="match status" value="1"/>
</dbReference>
<dbReference type="FunFam" id="2.40.30.20:FF:000001">
    <property type="entry name" value="ATP synthase subunit alpha"/>
    <property type="match status" value="1"/>
</dbReference>
<dbReference type="FunFam" id="3.40.50.300:FF:000002">
    <property type="entry name" value="ATP synthase subunit alpha"/>
    <property type="match status" value="1"/>
</dbReference>
<dbReference type="Gene3D" id="2.40.30.20">
    <property type="match status" value="1"/>
</dbReference>
<dbReference type="Gene3D" id="1.20.150.20">
    <property type="entry name" value="ATP synthase alpha/beta chain, C-terminal domain"/>
    <property type="match status" value="1"/>
</dbReference>
<dbReference type="Gene3D" id="3.40.50.300">
    <property type="entry name" value="P-loop containing nucleotide triphosphate hydrolases"/>
    <property type="match status" value="1"/>
</dbReference>
<dbReference type="HAMAP" id="MF_01346">
    <property type="entry name" value="ATP_synth_alpha_bact"/>
    <property type="match status" value="1"/>
</dbReference>
<dbReference type="InterPro" id="IPR023366">
    <property type="entry name" value="ATP_synth_asu-like_sf"/>
</dbReference>
<dbReference type="InterPro" id="IPR000793">
    <property type="entry name" value="ATP_synth_asu_C"/>
</dbReference>
<dbReference type="InterPro" id="IPR038376">
    <property type="entry name" value="ATP_synth_asu_C_sf"/>
</dbReference>
<dbReference type="InterPro" id="IPR033732">
    <property type="entry name" value="ATP_synth_F1_a_nt-bd_dom"/>
</dbReference>
<dbReference type="InterPro" id="IPR005294">
    <property type="entry name" value="ATP_synth_F1_asu"/>
</dbReference>
<dbReference type="InterPro" id="IPR020003">
    <property type="entry name" value="ATPase_a/bsu_AS"/>
</dbReference>
<dbReference type="InterPro" id="IPR004100">
    <property type="entry name" value="ATPase_F1/V1/A1_a/bsu_N"/>
</dbReference>
<dbReference type="InterPro" id="IPR036121">
    <property type="entry name" value="ATPase_F1/V1/A1_a/bsu_N_sf"/>
</dbReference>
<dbReference type="InterPro" id="IPR000194">
    <property type="entry name" value="ATPase_F1/V1/A1_a/bsu_nucl-bd"/>
</dbReference>
<dbReference type="InterPro" id="IPR027417">
    <property type="entry name" value="P-loop_NTPase"/>
</dbReference>
<dbReference type="NCBIfam" id="TIGR00962">
    <property type="entry name" value="atpA"/>
    <property type="match status" value="1"/>
</dbReference>
<dbReference type="NCBIfam" id="NF009884">
    <property type="entry name" value="PRK13343.1"/>
    <property type="match status" value="1"/>
</dbReference>
<dbReference type="PANTHER" id="PTHR48082">
    <property type="entry name" value="ATP SYNTHASE SUBUNIT ALPHA, MITOCHONDRIAL"/>
    <property type="match status" value="1"/>
</dbReference>
<dbReference type="PANTHER" id="PTHR48082:SF2">
    <property type="entry name" value="ATP SYNTHASE SUBUNIT ALPHA, MITOCHONDRIAL"/>
    <property type="match status" value="1"/>
</dbReference>
<dbReference type="Pfam" id="PF00006">
    <property type="entry name" value="ATP-synt_ab"/>
    <property type="match status" value="1"/>
</dbReference>
<dbReference type="Pfam" id="PF00306">
    <property type="entry name" value="ATP-synt_ab_C"/>
    <property type="match status" value="1"/>
</dbReference>
<dbReference type="Pfam" id="PF02874">
    <property type="entry name" value="ATP-synt_ab_N"/>
    <property type="match status" value="1"/>
</dbReference>
<dbReference type="PIRSF" id="PIRSF039088">
    <property type="entry name" value="F_ATPase_subunit_alpha"/>
    <property type="match status" value="1"/>
</dbReference>
<dbReference type="SUPFAM" id="SSF47917">
    <property type="entry name" value="C-terminal domain of alpha and beta subunits of F1 ATP synthase"/>
    <property type="match status" value="1"/>
</dbReference>
<dbReference type="SUPFAM" id="SSF50615">
    <property type="entry name" value="N-terminal domain of alpha and beta subunits of F1 ATP synthase"/>
    <property type="match status" value="1"/>
</dbReference>
<dbReference type="SUPFAM" id="SSF52540">
    <property type="entry name" value="P-loop containing nucleoside triphosphate hydrolases"/>
    <property type="match status" value="1"/>
</dbReference>
<dbReference type="PROSITE" id="PS00152">
    <property type="entry name" value="ATPASE_ALPHA_BETA"/>
    <property type="match status" value="1"/>
</dbReference>
<accession>B5EFI9</accession>
<comment type="function">
    <text evidence="1">Produces ATP from ADP in the presence of a proton gradient across the membrane. The alpha chain is a regulatory subunit.</text>
</comment>
<comment type="catalytic activity">
    <reaction evidence="1">
        <text>ATP + H2O + 4 H(+)(in) = ADP + phosphate + 5 H(+)(out)</text>
        <dbReference type="Rhea" id="RHEA:57720"/>
        <dbReference type="ChEBI" id="CHEBI:15377"/>
        <dbReference type="ChEBI" id="CHEBI:15378"/>
        <dbReference type="ChEBI" id="CHEBI:30616"/>
        <dbReference type="ChEBI" id="CHEBI:43474"/>
        <dbReference type="ChEBI" id="CHEBI:456216"/>
        <dbReference type="EC" id="7.1.2.2"/>
    </reaction>
</comment>
<comment type="subunit">
    <text evidence="1">F-type ATPases have 2 components, CF(1) - the catalytic core - and CF(0) - the membrane proton channel. CF(1) has five subunits: alpha(3), beta(3), gamma(1), delta(1), epsilon(1). CF(0) has three main subunits: a(1), b(2) and c(9-12). The alpha and beta chains form an alternating ring which encloses part of the gamma chain. CF(1) is attached to CF(0) by a central stalk formed by the gamma and epsilon chains, while a peripheral stalk is formed by the delta and b chains.</text>
</comment>
<comment type="subcellular location">
    <subcellularLocation>
        <location evidence="1">Cell inner membrane</location>
        <topology evidence="1">Peripheral membrane protein</topology>
    </subcellularLocation>
</comment>
<comment type="similarity">
    <text evidence="1">Belongs to the ATPase alpha/beta chains family.</text>
</comment>
<keyword id="KW-0066">ATP synthesis</keyword>
<keyword id="KW-0067">ATP-binding</keyword>
<keyword id="KW-0997">Cell inner membrane</keyword>
<keyword id="KW-1003">Cell membrane</keyword>
<keyword id="KW-0139">CF(1)</keyword>
<keyword id="KW-0375">Hydrogen ion transport</keyword>
<keyword id="KW-0406">Ion transport</keyword>
<keyword id="KW-0472">Membrane</keyword>
<keyword id="KW-0547">Nucleotide-binding</keyword>
<keyword id="KW-1185">Reference proteome</keyword>
<keyword id="KW-1278">Translocase</keyword>
<keyword id="KW-0813">Transport</keyword>
<sequence>MEIKAEEISEIIRKQIKEYGTEVAVAETGTIISIGDGIARIHGLDKAMAGELLEFPGGITGMVLNLEEDNVGAAILGEFSEIKEGDSVKLTGKIVEVPVGPALIGRVVDAIGNPIDGLGPINTDTFGKVEVKAPGIVKRKSVHQPMQTGLKAIDSMVPIGRGQRELIIGDRQTGKTAVAIDTIINQKGGDVVCIYVAIGQKRSTVAQVVSKLKEHGAMDYTIVVAATASEPAPLQFIAPYTGVTMGEFFRDSGKHALIIYDDLSKQAVAYRQLSLLLRRPPGREAYPGDVFYLHSRLLERACKVSDDCGAGSLTALPVIETQAGDVSAYIPTNVISITDGQIYLESDLFYSGVRPAINVGLSVSRVGGSAQVKAMKQVAGTLRLALAQYREMAAFAQFGSDLDKATQMQLARGARLVEILKQPQYRPIPNEKQVLIIFAANNGFVDDYPIGSLGRYETELYAFFDSRKATLLGELRDKKAIDDAMKGEIIASLEEFKKEFTA</sequence>